<feature type="chain" id="PRO_1000067779" description="UPF0391 membrane protein YtjA">
    <location>
        <begin position="1"/>
        <end position="53"/>
    </location>
</feature>
<feature type="transmembrane region" description="Helical" evidence="1">
    <location>
        <begin position="4"/>
        <end position="24"/>
    </location>
</feature>
<feature type="transmembrane region" description="Helical" evidence="1">
    <location>
        <begin position="30"/>
        <end position="48"/>
    </location>
</feature>
<evidence type="ECO:0000255" key="1">
    <source>
        <dbReference type="HAMAP-Rule" id="MF_01361"/>
    </source>
</evidence>
<accession>A7ZVR8</accession>
<keyword id="KW-1003">Cell membrane</keyword>
<keyword id="KW-0472">Membrane</keyword>
<keyword id="KW-1185">Reference proteome</keyword>
<keyword id="KW-0812">Transmembrane</keyword>
<keyword id="KW-1133">Transmembrane helix</keyword>
<organism>
    <name type="scientific">Escherichia coli O139:H28 (strain E24377A / ETEC)</name>
    <dbReference type="NCBI Taxonomy" id="331111"/>
    <lineage>
        <taxon>Bacteria</taxon>
        <taxon>Pseudomonadati</taxon>
        <taxon>Pseudomonadota</taxon>
        <taxon>Gammaproteobacteria</taxon>
        <taxon>Enterobacterales</taxon>
        <taxon>Enterobacteriaceae</taxon>
        <taxon>Escherichia</taxon>
    </lineage>
</organism>
<gene>
    <name evidence="1" type="primary">ytjA</name>
    <name type="ordered locus">EcE24377A_4974</name>
</gene>
<reference key="1">
    <citation type="journal article" date="2008" name="J. Bacteriol.">
        <title>The pangenome structure of Escherichia coli: comparative genomic analysis of E. coli commensal and pathogenic isolates.</title>
        <authorList>
            <person name="Rasko D.A."/>
            <person name="Rosovitz M.J."/>
            <person name="Myers G.S.A."/>
            <person name="Mongodin E.F."/>
            <person name="Fricke W.F."/>
            <person name="Gajer P."/>
            <person name="Crabtree J."/>
            <person name="Sebaihia M."/>
            <person name="Thomson N.R."/>
            <person name="Chaudhuri R."/>
            <person name="Henderson I.R."/>
            <person name="Sperandio V."/>
            <person name="Ravel J."/>
        </authorList>
    </citation>
    <scope>NUCLEOTIDE SEQUENCE [LARGE SCALE GENOMIC DNA]</scope>
    <source>
        <strain>E24377A / ETEC</strain>
    </source>
</reference>
<dbReference type="EMBL" id="CP000800">
    <property type="protein sequence ID" value="ABV20365.1"/>
    <property type="molecule type" value="Genomic_DNA"/>
</dbReference>
<dbReference type="RefSeq" id="WP_000490275.1">
    <property type="nucleotide sequence ID" value="NC_009801.1"/>
</dbReference>
<dbReference type="KEGG" id="ecw:EcE24377A_4974"/>
<dbReference type="HOGENOM" id="CLU_187346_2_0_6"/>
<dbReference type="Proteomes" id="UP000001122">
    <property type="component" value="Chromosome"/>
</dbReference>
<dbReference type="GO" id="GO:0005886">
    <property type="term" value="C:plasma membrane"/>
    <property type="evidence" value="ECO:0007669"/>
    <property type="project" value="UniProtKB-SubCell"/>
</dbReference>
<dbReference type="HAMAP" id="MF_01361">
    <property type="entry name" value="UPF0391"/>
    <property type="match status" value="1"/>
</dbReference>
<dbReference type="InterPro" id="IPR009760">
    <property type="entry name" value="DUF1328"/>
</dbReference>
<dbReference type="NCBIfam" id="NF010229">
    <property type="entry name" value="PRK13682.1-4"/>
    <property type="match status" value="1"/>
</dbReference>
<dbReference type="NCBIfam" id="NF010230">
    <property type="entry name" value="PRK13682.1-5"/>
    <property type="match status" value="1"/>
</dbReference>
<dbReference type="Pfam" id="PF07043">
    <property type="entry name" value="DUF1328"/>
    <property type="match status" value="1"/>
</dbReference>
<dbReference type="PIRSF" id="PIRSF036466">
    <property type="entry name" value="UCP036466"/>
    <property type="match status" value="1"/>
</dbReference>
<comment type="subcellular location">
    <subcellularLocation>
        <location evidence="1">Cell membrane</location>
        <topology evidence="1">Multi-pass membrane protein</topology>
    </subcellularLocation>
</comment>
<comment type="similarity">
    <text evidence="1">Belongs to the UPF0391 family.</text>
</comment>
<sequence length="53" mass="5536">MFRWGIIFLVIALIAAALGFGGLAGTAAGAAKIVFVVGIILFLVSLFMGRKRP</sequence>
<protein>
    <recommendedName>
        <fullName evidence="1">UPF0391 membrane protein YtjA</fullName>
    </recommendedName>
</protein>
<proteinExistence type="inferred from homology"/>
<name>YTJA_ECO24</name>